<protein>
    <recommendedName>
        <fullName evidence="4">Glutathione S-transferase B</fullName>
        <shortName>GST B</shortName>
        <ecNumber evidence="3">2.5.1.18</ecNumber>
    </recommendedName>
    <alternativeName>
        <fullName>GST class-mu</fullName>
    </alternativeName>
</protein>
<organism>
    <name type="scientific">Cavia porcellus</name>
    <name type="common">Guinea pig</name>
    <dbReference type="NCBI Taxonomy" id="10141"/>
    <lineage>
        <taxon>Eukaryota</taxon>
        <taxon>Metazoa</taxon>
        <taxon>Chordata</taxon>
        <taxon>Craniata</taxon>
        <taxon>Vertebrata</taxon>
        <taxon>Euteleostomi</taxon>
        <taxon>Mammalia</taxon>
        <taxon>Eutheria</taxon>
        <taxon>Euarchontoglires</taxon>
        <taxon>Glires</taxon>
        <taxon>Rodentia</taxon>
        <taxon>Hystricomorpha</taxon>
        <taxon>Caviidae</taxon>
        <taxon>Cavia</taxon>
    </lineage>
</organism>
<proteinExistence type="evidence at protein level"/>
<gene>
    <name type="primary">GSTM1</name>
</gene>
<dbReference type="EC" id="2.5.1.18" evidence="3"/>
<dbReference type="PIR" id="JX0095">
    <property type="entry name" value="JX0095"/>
</dbReference>
<dbReference type="SMR" id="P16413"/>
<dbReference type="STRING" id="10141.ENSCPOP00000007027"/>
<dbReference type="eggNOG" id="KOG1695">
    <property type="taxonomic scope" value="Eukaryota"/>
</dbReference>
<dbReference type="InParanoid" id="P16413"/>
<dbReference type="Proteomes" id="UP000005447">
    <property type="component" value="Unassembled WGS sequence"/>
</dbReference>
<dbReference type="GO" id="GO:0005737">
    <property type="term" value="C:cytoplasm"/>
    <property type="evidence" value="ECO:0007669"/>
    <property type="project" value="UniProtKB-SubCell"/>
</dbReference>
<dbReference type="GO" id="GO:0004364">
    <property type="term" value="F:glutathione transferase activity"/>
    <property type="evidence" value="ECO:0000250"/>
    <property type="project" value="UniProtKB"/>
</dbReference>
<dbReference type="GO" id="GO:1901687">
    <property type="term" value="P:glutathione derivative biosynthetic process"/>
    <property type="evidence" value="ECO:0000250"/>
    <property type="project" value="UniProtKB"/>
</dbReference>
<dbReference type="GO" id="GO:0006749">
    <property type="term" value="P:glutathione metabolic process"/>
    <property type="evidence" value="ECO:0007669"/>
    <property type="project" value="TreeGrafter"/>
</dbReference>
<dbReference type="GO" id="GO:0051122">
    <property type="term" value="P:hepoxilin biosynthetic process"/>
    <property type="evidence" value="ECO:0000250"/>
    <property type="project" value="UniProtKB"/>
</dbReference>
<dbReference type="GO" id="GO:0006693">
    <property type="term" value="P:prostaglandin metabolic process"/>
    <property type="evidence" value="ECO:0000250"/>
    <property type="project" value="UniProtKB"/>
</dbReference>
<dbReference type="CDD" id="cd03209">
    <property type="entry name" value="GST_C_Mu"/>
    <property type="match status" value="1"/>
</dbReference>
<dbReference type="CDD" id="cd03075">
    <property type="entry name" value="GST_N_Mu"/>
    <property type="match status" value="1"/>
</dbReference>
<dbReference type="FunFam" id="1.20.1050.10:FF:000083">
    <property type="entry name" value="Glutathione S-transferase Mu 1"/>
    <property type="match status" value="1"/>
</dbReference>
<dbReference type="FunFam" id="3.40.30.10:FF:000603">
    <property type="entry name" value="Glutathione S-transferase Mu 1"/>
    <property type="match status" value="1"/>
</dbReference>
<dbReference type="Gene3D" id="1.20.1050.10">
    <property type="match status" value="1"/>
</dbReference>
<dbReference type="Gene3D" id="3.40.30.10">
    <property type="entry name" value="Glutaredoxin"/>
    <property type="match status" value="1"/>
</dbReference>
<dbReference type="InterPro" id="IPR010987">
    <property type="entry name" value="Glutathione-S-Trfase_C-like"/>
</dbReference>
<dbReference type="InterPro" id="IPR036282">
    <property type="entry name" value="Glutathione-S-Trfase_C_sf"/>
</dbReference>
<dbReference type="InterPro" id="IPR004045">
    <property type="entry name" value="Glutathione_S-Trfase_N"/>
</dbReference>
<dbReference type="InterPro" id="IPR004046">
    <property type="entry name" value="GST_C"/>
</dbReference>
<dbReference type="InterPro" id="IPR003081">
    <property type="entry name" value="GST_mu"/>
</dbReference>
<dbReference type="InterPro" id="IPR050213">
    <property type="entry name" value="GST_superfamily"/>
</dbReference>
<dbReference type="InterPro" id="IPR036249">
    <property type="entry name" value="Thioredoxin-like_sf"/>
</dbReference>
<dbReference type="PANTHER" id="PTHR11571">
    <property type="entry name" value="GLUTATHIONE S-TRANSFERASE"/>
    <property type="match status" value="1"/>
</dbReference>
<dbReference type="PANTHER" id="PTHR11571:SF126">
    <property type="entry name" value="GLUTATHIONE S-TRANSFERASE MU 1-RELATED"/>
    <property type="match status" value="1"/>
</dbReference>
<dbReference type="Pfam" id="PF00043">
    <property type="entry name" value="GST_C"/>
    <property type="match status" value="1"/>
</dbReference>
<dbReference type="Pfam" id="PF02798">
    <property type="entry name" value="GST_N"/>
    <property type="match status" value="1"/>
</dbReference>
<dbReference type="PRINTS" id="PR01267">
    <property type="entry name" value="GSTRNSFRASEM"/>
</dbReference>
<dbReference type="SFLD" id="SFLDG01205">
    <property type="entry name" value="AMPS.1"/>
    <property type="match status" value="1"/>
</dbReference>
<dbReference type="SFLD" id="SFLDG00363">
    <property type="entry name" value="AMPS_(cytGST):_Alpha-__Mu-__Pi"/>
    <property type="match status" value="1"/>
</dbReference>
<dbReference type="SUPFAM" id="SSF47616">
    <property type="entry name" value="GST C-terminal domain-like"/>
    <property type="match status" value="1"/>
</dbReference>
<dbReference type="SUPFAM" id="SSF52833">
    <property type="entry name" value="Thioredoxin-like"/>
    <property type="match status" value="1"/>
</dbReference>
<dbReference type="PROSITE" id="PS50405">
    <property type="entry name" value="GST_CTER"/>
    <property type="match status" value="1"/>
</dbReference>
<dbReference type="PROSITE" id="PS50404">
    <property type="entry name" value="GST_NTER"/>
    <property type="match status" value="1"/>
</dbReference>
<reference key="1">
    <citation type="journal article" date="1990" name="J. Biochem.">
        <title>Amino acid sequence of glutathione S-transferase b from guinea pig liver.</title>
        <authorList>
            <person name="Kamei K."/>
            <person name="Oshino R."/>
            <person name="Hara S."/>
        </authorList>
    </citation>
    <scope>PROTEIN SEQUENCE</scope>
    <source>
        <tissue>Liver</tissue>
    </source>
</reference>
<sequence length="217" mass="25719">PMTLGYWNIRGLTHPIRLILEYTNSGYEEKRYNMGDAPDYDRSQWLNEKFKLGLDFPNLPYLIDGTHKLTQSNAILRYIARKHNLCGVTEEETIRMDILENQVMDIRMQLIMLCYSPDFEQKKAEFLEGIPDKMKLFSQFLGKLPWFAGNKLTYVDFLAYDVLDQYRMLEPKCLEAFPNLKDFISRFEGLEKISSYMKSSRFLPKPLFSKFAFWNNK</sequence>
<keyword id="KW-0963">Cytoplasm</keyword>
<keyword id="KW-0903">Direct protein sequencing</keyword>
<keyword id="KW-0443">Lipid metabolism</keyword>
<keyword id="KW-1185">Reference proteome</keyword>
<keyword id="KW-0808">Transferase</keyword>
<name>GSTM1_CAVPO</name>
<feature type="chain" id="PRO_0000185834" description="Glutathione S-transferase B">
    <location>
        <begin position="1"/>
        <end position="217"/>
    </location>
</feature>
<feature type="domain" description="GST N-terminal">
    <location>
        <begin position="1"/>
        <end position="87"/>
    </location>
</feature>
<feature type="domain" description="GST C-terminal">
    <location>
        <begin position="89"/>
        <end position="207"/>
    </location>
</feature>
<feature type="binding site" evidence="2">
    <location>
        <begin position="6"/>
        <end position="7"/>
    </location>
    <ligand>
        <name>glutathione</name>
        <dbReference type="ChEBI" id="CHEBI:57925"/>
    </ligand>
</feature>
<feature type="binding site" evidence="2">
    <location>
        <begin position="45"/>
        <end position="49"/>
    </location>
    <ligand>
        <name>glutathione</name>
        <dbReference type="ChEBI" id="CHEBI:57925"/>
    </ligand>
</feature>
<feature type="binding site" evidence="2">
    <location>
        <begin position="58"/>
        <end position="59"/>
    </location>
    <ligand>
        <name>glutathione</name>
        <dbReference type="ChEBI" id="CHEBI:57925"/>
    </ligand>
</feature>
<feature type="binding site" evidence="2">
    <location>
        <begin position="71"/>
        <end position="72"/>
    </location>
    <ligand>
        <name>glutathione</name>
        <dbReference type="ChEBI" id="CHEBI:57925"/>
    </ligand>
</feature>
<feature type="binding site" evidence="1">
    <location>
        <position position="115"/>
    </location>
    <ligand>
        <name>substrate</name>
    </ligand>
</feature>
<accession>P16413</accession>
<evidence type="ECO:0000250" key="1"/>
<evidence type="ECO:0000250" key="2">
    <source>
        <dbReference type="UniProtKB" id="P08515"/>
    </source>
</evidence>
<evidence type="ECO:0000250" key="3">
    <source>
        <dbReference type="UniProtKB" id="P09488"/>
    </source>
</evidence>
<evidence type="ECO:0000305" key="4"/>
<comment type="function">
    <text evidence="3">Conjugation of reduced glutathione to a wide number of exogenous and endogenous hydrophobic electrophiles. Involved in the formation of glutathione conjugates of both prostaglandin A2 (PGA2) and prostaglandin J2 (PGJ2). Participates in the formation of novel hepoxilin regioisomers.</text>
</comment>
<comment type="catalytic activity">
    <reaction evidence="3">
        <text>RX + glutathione = an S-substituted glutathione + a halide anion + H(+)</text>
        <dbReference type="Rhea" id="RHEA:16437"/>
        <dbReference type="ChEBI" id="CHEBI:15378"/>
        <dbReference type="ChEBI" id="CHEBI:16042"/>
        <dbReference type="ChEBI" id="CHEBI:17792"/>
        <dbReference type="ChEBI" id="CHEBI:57925"/>
        <dbReference type="ChEBI" id="CHEBI:90779"/>
        <dbReference type="EC" id="2.5.1.18"/>
    </reaction>
    <physiologicalReaction direction="left-to-right" evidence="3">
        <dbReference type="Rhea" id="RHEA:16438"/>
    </physiologicalReaction>
</comment>
<comment type="catalytic activity">
    <reaction evidence="3">
        <text>prostaglandin A2 + glutathione = prostaglandin A2-S-(R)-glutathione</text>
        <dbReference type="Rhea" id="RHEA:50796"/>
        <dbReference type="ChEBI" id="CHEBI:57925"/>
        <dbReference type="ChEBI" id="CHEBI:133370"/>
        <dbReference type="ChEBI" id="CHEBI:133768"/>
    </reaction>
    <physiologicalReaction direction="left-to-right" evidence="3">
        <dbReference type="Rhea" id="RHEA:50797"/>
    </physiologicalReaction>
</comment>
<comment type="catalytic activity">
    <reaction evidence="3">
        <text>prostaglandin J2 + glutathione = prostaglandin J2-S-(R)-glutathione</text>
        <dbReference type="Rhea" id="RHEA:50804"/>
        <dbReference type="ChEBI" id="CHEBI:57925"/>
        <dbReference type="ChEBI" id="CHEBI:133396"/>
        <dbReference type="ChEBI" id="CHEBI:133771"/>
    </reaction>
    <physiologicalReaction direction="left-to-right" evidence="3">
        <dbReference type="Rhea" id="RHEA:50805"/>
    </physiologicalReaction>
</comment>
<comment type="catalytic activity">
    <reaction evidence="3">
        <text>prostaglandin J2 + glutathione = prostaglandin J2-S-(S)-glutathione</text>
        <dbReference type="Rhea" id="RHEA:50808"/>
        <dbReference type="ChEBI" id="CHEBI:57925"/>
        <dbReference type="ChEBI" id="CHEBI:133396"/>
        <dbReference type="ChEBI" id="CHEBI:133772"/>
    </reaction>
    <physiologicalReaction direction="left-to-right" evidence="3">
        <dbReference type="Rhea" id="RHEA:50809"/>
    </physiologicalReaction>
</comment>
<comment type="catalytic activity">
    <reaction evidence="3">
        <text>prostaglandin A2 + glutathione = prostaglandin A2-S-(S)-glutathione</text>
        <dbReference type="Rhea" id="RHEA:50800"/>
        <dbReference type="ChEBI" id="CHEBI:57925"/>
        <dbReference type="ChEBI" id="CHEBI:133370"/>
        <dbReference type="ChEBI" id="CHEBI:133769"/>
    </reaction>
    <physiologicalReaction direction="left-to-right" evidence="3">
        <dbReference type="Rhea" id="RHEA:50801"/>
    </physiologicalReaction>
</comment>
<comment type="catalytic activity">
    <reaction evidence="3">
        <text>11(S)-hydroxy-14(S),15(S)-epoxy-(5Z,8Z,12E)-eicosatrienoate + glutathione = (11S,15S)-dihydroxy-14(R)-S-glutathionyl-(5Z,8Z,12E)-eicosatrienoate</text>
        <dbReference type="Rhea" id="RHEA:50260"/>
        <dbReference type="ChEBI" id="CHEBI:57925"/>
        <dbReference type="ChEBI" id="CHEBI:132200"/>
        <dbReference type="ChEBI" id="CHEBI:132201"/>
    </reaction>
    <physiologicalReaction direction="left-to-right" evidence="3">
        <dbReference type="Rhea" id="RHEA:50261"/>
    </physiologicalReaction>
</comment>
<comment type="subunit">
    <text>Homodimer.</text>
</comment>
<comment type="subcellular location">
    <subcellularLocation>
        <location>Cytoplasm</location>
    </subcellularLocation>
</comment>
<comment type="similarity">
    <text evidence="4">Belongs to the GST superfamily. Mu family.</text>
</comment>